<proteinExistence type="inferred from homology"/>
<feature type="chain" id="PRO_1000097019" description="3-methyl-2-oxobutanoate hydroxymethyltransferase">
    <location>
        <begin position="1"/>
        <end position="271"/>
    </location>
</feature>
<feature type="active site" description="Proton acceptor" evidence="1">
    <location>
        <position position="186"/>
    </location>
</feature>
<feature type="binding site" evidence="1">
    <location>
        <begin position="51"/>
        <end position="52"/>
    </location>
    <ligand>
        <name>3-methyl-2-oxobutanoate</name>
        <dbReference type="ChEBI" id="CHEBI:11851"/>
    </ligand>
</feature>
<feature type="binding site" evidence="1">
    <location>
        <position position="51"/>
    </location>
    <ligand>
        <name>Mg(2+)</name>
        <dbReference type="ChEBI" id="CHEBI:18420"/>
    </ligand>
</feature>
<feature type="binding site" evidence="1">
    <location>
        <position position="90"/>
    </location>
    <ligand>
        <name>3-methyl-2-oxobutanoate</name>
        <dbReference type="ChEBI" id="CHEBI:11851"/>
    </ligand>
</feature>
<feature type="binding site" evidence="1">
    <location>
        <position position="90"/>
    </location>
    <ligand>
        <name>Mg(2+)</name>
        <dbReference type="ChEBI" id="CHEBI:18420"/>
    </ligand>
</feature>
<feature type="binding site" evidence="1">
    <location>
        <position position="118"/>
    </location>
    <ligand>
        <name>3-methyl-2-oxobutanoate</name>
        <dbReference type="ChEBI" id="CHEBI:11851"/>
    </ligand>
</feature>
<feature type="binding site" evidence="1">
    <location>
        <position position="120"/>
    </location>
    <ligand>
        <name>Mg(2+)</name>
        <dbReference type="ChEBI" id="CHEBI:18420"/>
    </ligand>
</feature>
<keyword id="KW-0963">Cytoplasm</keyword>
<keyword id="KW-0460">Magnesium</keyword>
<keyword id="KW-0479">Metal-binding</keyword>
<keyword id="KW-0566">Pantothenate biosynthesis</keyword>
<keyword id="KW-0808">Transferase</keyword>
<protein>
    <recommendedName>
        <fullName evidence="1">3-methyl-2-oxobutanoate hydroxymethyltransferase</fullName>
        <ecNumber evidence="1">2.1.2.11</ecNumber>
    </recommendedName>
    <alternativeName>
        <fullName evidence="1">Ketopantoate hydroxymethyltransferase</fullName>
        <shortName evidence="1">KPHMT</shortName>
    </alternativeName>
</protein>
<organism>
    <name type="scientific">Xanthomonas oryzae pv. oryzae (strain PXO99A)</name>
    <dbReference type="NCBI Taxonomy" id="360094"/>
    <lineage>
        <taxon>Bacteria</taxon>
        <taxon>Pseudomonadati</taxon>
        <taxon>Pseudomonadota</taxon>
        <taxon>Gammaproteobacteria</taxon>
        <taxon>Lysobacterales</taxon>
        <taxon>Lysobacteraceae</taxon>
        <taxon>Xanthomonas</taxon>
    </lineage>
</organism>
<accession>B2SJL8</accession>
<dbReference type="EC" id="2.1.2.11" evidence="1"/>
<dbReference type="EMBL" id="CP000967">
    <property type="protein sequence ID" value="ACD58802.1"/>
    <property type="molecule type" value="Genomic_DNA"/>
</dbReference>
<dbReference type="RefSeq" id="WP_011259032.1">
    <property type="nucleotide sequence ID" value="NC_010717.2"/>
</dbReference>
<dbReference type="SMR" id="B2SJL8"/>
<dbReference type="KEGG" id="xop:PXO_00690"/>
<dbReference type="eggNOG" id="COG0413">
    <property type="taxonomic scope" value="Bacteria"/>
</dbReference>
<dbReference type="HOGENOM" id="CLU_036645_1_0_6"/>
<dbReference type="UniPathway" id="UPA00028">
    <property type="reaction ID" value="UER00003"/>
</dbReference>
<dbReference type="Proteomes" id="UP000001740">
    <property type="component" value="Chromosome"/>
</dbReference>
<dbReference type="GO" id="GO:0005737">
    <property type="term" value="C:cytoplasm"/>
    <property type="evidence" value="ECO:0007669"/>
    <property type="project" value="UniProtKB-SubCell"/>
</dbReference>
<dbReference type="GO" id="GO:0003864">
    <property type="term" value="F:3-methyl-2-oxobutanoate hydroxymethyltransferase activity"/>
    <property type="evidence" value="ECO:0007669"/>
    <property type="project" value="UniProtKB-UniRule"/>
</dbReference>
<dbReference type="GO" id="GO:0000287">
    <property type="term" value="F:magnesium ion binding"/>
    <property type="evidence" value="ECO:0007669"/>
    <property type="project" value="TreeGrafter"/>
</dbReference>
<dbReference type="GO" id="GO:0015940">
    <property type="term" value="P:pantothenate biosynthetic process"/>
    <property type="evidence" value="ECO:0007669"/>
    <property type="project" value="UniProtKB-UniRule"/>
</dbReference>
<dbReference type="CDD" id="cd06557">
    <property type="entry name" value="KPHMT-like"/>
    <property type="match status" value="1"/>
</dbReference>
<dbReference type="FunFam" id="3.20.20.60:FF:000032">
    <property type="entry name" value="3-methyl-2-oxobutanoate hydroxymethyltransferase"/>
    <property type="match status" value="1"/>
</dbReference>
<dbReference type="Gene3D" id="3.20.20.60">
    <property type="entry name" value="Phosphoenolpyruvate-binding domains"/>
    <property type="match status" value="1"/>
</dbReference>
<dbReference type="HAMAP" id="MF_00156">
    <property type="entry name" value="PanB"/>
    <property type="match status" value="1"/>
</dbReference>
<dbReference type="InterPro" id="IPR003700">
    <property type="entry name" value="Pantoate_hydroxy_MeTrfase"/>
</dbReference>
<dbReference type="InterPro" id="IPR015813">
    <property type="entry name" value="Pyrv/PenolPyrv_kinase-like_dom"/>
</dbReference>
<dbReference type="InterPro" id="IPR040442">
    <property type="entry name" value="Pyrv_kinase-like_dom_sf"/>
</dbReference>
<dbReference type="NCBIfam" id="TIGR00222">
    <property type="entry name" value="panB"/>
    <property type="match status" value="1"/>
</dbReference>
<dbReference type="NCBIfam" id="NF001452">
    <property type="entry name" value="PRK00311.1"/>
    <property type="match status" value="1"/>
</dbReference>
<dbReference type="PANTHER" id="PTHR20881">
    <property type="entry name" value="3-METHYL-2-OXOBUTANOATE HYDROXYMETHYLTRANSFERASE"/>
    <property type="match status" value="1"/>
</dbReference>
<dbReference type="PANTHER" id="PTHR20881:SF0">
    <property type="entry name" value="3-METHYL-2-OXOBUTANOATE HYDROXYMETHYLTRANSFERASE"/>
    <property type="match status" value="1"/>
</dbReference>
<dbReference type="Pfam" id="PF02548">
    <property type="entry name" value="Pantoate_transf"/>
    <property type="match status" value="1"/>
</dbReference>
<dbReference type="PIRSF" id="PIRSF000388">
    <property type="entry name" value="Pantoate_hydroxy_MeTrfase"/>
    <property type="match status" value="1"/>
</dbReference>
<dbReference type="SUPFAM" id="SSF51621">
    <property type="entry name" value="Phosphoenolpyruvate/pyruvate domain"/>
    <property type="match status" value="1"/>
</dbReference>
<reference key="1">
    <citation type="journal article" date="2008" name="BMC Genomics">
        <title>Genome sequence and rapid evolution of the rice pathogen Xanthomonas oryzae pv. oryzae PXO99A.</title>
        <authorList>
            <person name="Salzberg S.L."/>
            <person name="Sommer D.D."/>
            <person name="Schatz M.C."/>
            <person name="Phillippy A.M."/>
            <person name="Rabinowicz P.D."/>
            <person name="Tsuge S."/>
            <person name="Furutani A."/>
            <person name="Ochiai H."/>
            <person name="Delcher A.L."/>
            <person name="Kelley D."/>
            <person name="Madupu R."/>
            <person name="Puiu D."/>
            <person name="Radune D."/>
            <person name="Shumway M."/>
            <person name="Trapnell C."/>
            <person name="Aparna G."/>
            <person name="Jha G."/>
            <person name="Pandey A."/>
            <person name="Patil P.B."/>
            <person name="Ishihara H."/>
            <person name="Meyer D.F."/>
            <person name="Szurek B."/>
            <person name="Verdier V."/>
            <person name="Koebnik R."/>
            <person name="Dow J.M."/>
            <person name="Ryan R.P."/>
            <person name="Hirata H."/>
            <person name="Tsuyumu S."/>
            <person name="Won Lee S."/>
            <person name="Seo Y.-S."/>
            <person name="Sriariyanum M."/>
            <person name="Ronald P.C."/>
            <person name="Sonti R.V."/>
            <person name="Van Sluys M.-A."/>
            <person name="Leach J.E."/>
            <person name="White F.F."/>
            <person name="Bogdanove A.J."/>
        </authorList>
    </citation>
    <scope>NUCLEOTIDE SEQUENCE [LARGE SCALE GENOMIC DNA]</scope>
    <source>
        <strain>PXO99A</strain>
    </source>
</reference>
<gene>
    <name evidence="1" type="primary">panB</name>
    <name type="ordered locus">PXO_00690</name>
</gene>
<comment type="function">
    <text evidence="1">Catalyzes the reversible reaction in which hydroxymethyl group from 5,10-methylenetetrahydrofolate is transferred onto alpha-ketoisovalerate to form ketopantoate.</text>
</comment>
<comment type="catalytic activity">
    <reaction evidence="1">
        <text>3-methyl-2-oxobutanoate + (6R)-5,10-methylene-5,6,7,8-tetrahydrofolate + H2O = 2-dehydropantoate + (6S)-5,6,7,8-tetrahydrofolate</text>
        <dbReference type="Rhea" id="RHEA:11824"/>
        <dbReference type="ChEBI" id="CHEBI:11561"/>
        <dbReference type="ChEBI" id="CHEBI:11851"/>
        <dbReference type="ChEBI" id="CHEBI:15377"/>
        <dbReference type="ChEBI" id="CHEBI:15636"/>
        <dbReference type="ChEBI" id="CHEBI:57453"/>
        <dbReference type="EC" id="2.1.2.11"/>
    </reaction>
</comment>
<comment type="cofactor">
    <cofactor evidence="1">
        <name>Mg(2+)</name>
        <dbReference type="ChEBI" id="CHEBI:18420"/>
    </cofactor>
    <text evidence="1">Binds 1 Mg(2+) ion per subunit.</text>
</comment>
<comment type="pathway">
    <text evidence="1">Cofactor biosynthesis; (R)-pantothenate biosynthesis; (R)-pantoate from 3-methyl-2-oxobutanoate: step 1/2.</text>
</comment>
<comment type="subunit">
    <text evidence="1">Homodecamer; pentamer of dimers.</text>
</comment>
<comment type="subcellular location">
    <subcellularLocation>
        <location evidence="1">Cytoplasm</location>
    </subcellularLocation>
</comment>
<comment type="similarity">
    <text evidence="1">Belongs to the PanB family.</text>
</comment>
<name>PANB_XANOP</name>
<sequence length="271" mass="28461">MSSHADSNPWTVPALAQAKRAGRKLVMLTAYDASFARTFDVNGVDLILVGDSLGMVMQGHDSTLAVTTADMVYHTAAVARALDRALLVADLSFQADATPERALDAATQLLQAGAEMVKIEGAGHKLEVIRYLVEREIPVCSHLGLTPQSVLRFGGYKVQGRGEAGEQLRRDAQAVVDAGASLVVLECVPTPIATQISAELSVPTIGIGAGPGCDGQVLVMHDMLGLDSGHRRPKFVKDFLAEGGSVAGAVRAYAQAVRDGSFPDAEHAYAA</sequence>
<evidence type="ECO:0000255" key="1">
    <source>
        <dbReference type="HAMAP-Rule" id="MF_00156"/>
    </source>
</evidence>